<proteinExistence type="inferred from homology"/>
<dbReference type="EC" id="3.5.4.5" evidence="1"/>
<dbReference type="EMBL" id="AP009240">
    <property type="protein sequence ID" value="BAG77934.1"/>
    <property type="molecule type" value="Genomic_DNA"/>
</dbReference>
<dbReference type="RefSeq" id="WP_000553555.1">
    <property type="nucleotide sequence ID" value="NC_011415.1"/>
</dbReference>
<dbReference type="SMR" id="B6I8J3"/>
<dbReference type="GeneID" id="93775039"/>
<dbReference type="KEGG" id="ecy:ECSE_2410"/>
<dbReference type="HOGENOM" id="CLU_052424_0_0_6"/>
<dbReference type="Proteomes" id="UP000008199">
    <property type="component" value="Chromosome"/>
</dbReference>
<dbReference type="GO" id="GO:0005829">
    <property type="term" value="C:cytosol"/>
    <property type="evidence" value="ECO:0007669"/>
    <property type="project" value="TreeGrafter"/>
</dbReference>
<dbReference type="GO" id="GO:0004126">
    <property type="term" value="F:cytidine deaminase activity"/>
    <property type="evidence" value="ECO:0007669"/>
    <property type="project" value="UniProtKB-UniRule"/>
</dbReference>
<dbReference type="GO" id="GO:0042802">
    <property type="term" value="F:identical protein binding"/>
    <property type="evidence" value="ECO:0007669"/>
    <property type="project" value="UniProtKB-ARBA"/>
</dbReference>
<dbReference type="GO" id="GO:0008270">
    <property type="term" value="F:zinc ion binding"/>
    <property type="evidence" value="ECO:0007669"/>
    <property type="project" value="UniProtKB-UniRule"/>
</dbReference>
<dbReference type="GO" id="GO:0009972">
    <property type="term" value="P:cytidine deamination"/>
    <property type="evidence" value="ECO:0007669"/>
    <property type="project" value="InterPro"/>
</dbReference>
<dbReference type="CDD" id="cd01283">
    <property type="entry name" value="cytidine_deaminase"/>
    <property type="match status" value="2"/>
</dbReference>
<dbReference type="FunFam" id="3.40.140.10:FF:000006">
    <property type="entry name" value="Cytidine deaminase"/>
    <property type="match status" value="1"/>
</dbReference>
<dbReference type="FunFam" id="3.40.140.10:FF:000007">
    <property type="entry name" value="Cytidine deaminase"/>
    <property type="match status" value="1"/>
</dbReference>
<dbReference type="Gene3D" id="3.40.140.10">
    <property type="entry name" value="Cytidine Deaminase, domain 2"/>
    <property type="match status" value="2"/>
</dbReference>
<dbReference type="HAMAP" id="MF_01558">
    <property type="entry name" value="Cyt_deam"/>
    <property type="match status" value="1"/>
</dbReference>
<dbReference type="InterPro" id="IPR016192">
    <property type="entry name" value="APOBEC/CMP_deaminase_Zn-bd"/>
</dbReference>
<dbReference type="InterPro" id="IPR002125">
    <property type="entry name" value="CMP_dCMP_dom"/>
</dbReference>
<dbReference type="InterPro" id="IPR013171">
    <property type="entry name" value="Cyd/dCyd_deaminase_Zn-bd"/>
</dbReference>
<dbReference type="InterPro" id="IPR050202">
    <property type="entry name" value="Cyt/Deoxycyt_deaminase"/>
</dbReference>
<dbReference type="InterPro" id="IPR006263">
    <property type="entry name" value="Cyt_deam_dimer"/>
</dbReference>
<dbReference type="InterPro" id="IPR016193">
    <property type="entry name" value="Cytidine_deaminase-like"/>
</dbReference>
<dbReference type="InterPro" id="IPR020797">
    <property type="entry name" value="Cytidine_deaminase_bacteria"/>
</dbReference>
<dbReference type="NCBIfam" id="TIGR01355">
    <property type="entry name" value="cyt_deam_dimer"/>
    <property type="match status" value="1"/>
</dbReference>
<dbReference type="NCBIfam" id="NF006537">
    <property type="entry name" value="PRK09027.1"/>
    <property type="match status" value="1"/>
</dbReference>
<dbReference type="PANTHER" id="PTHR11644">
    <property type="entry name" value="CYTIDINE DEAMINASE"/>
    <property type="match status" value="1"/>
</dbReference>
<dbReference type="PANTHER" id="PTHR11644:SF2">
    <property type="entry name" value="CYTIDINE DEAMINASE"/>
    <property type="match status" value="1"/>
</dbReference>
<dbReference type="Pfam" id="PF00383">
    <property type="entry name" value="dCMP_cyt_deam_1"/>
    <property type="match status" value="1"/>
</dbReference>
<dbReference type="Pfam" id="PF08211">
    <property type="entry name" value="dCMP_cyt_deam_2"/>
    <property type="match status" value="1"/>
</dbReference>
<dbReference type="PIRSF" id="PIRSF006334">
    <property type="entry name" value="Cdd_plus_pseudo"/>
    <property type="match status" value="1"/>
</dbReference>
<dbReference type="SUPFAM" id="SSF53927">
    <property type="entry name" value="Cytidine deaminase-like"/>
    <property type="match status" value="2"/>
</dbReference>
<dbReference type="PROSITE" id="PS00903">
    <property type="entry name" value="CYT_DCMP_DEAMINASES_1"/>
    <property type="match status" value="1"/>
</dbReference>
<dbReference type="PROSITE" id="PS51747">
    <property type="entry name" value="CYT_DCMP_DEAMINASES_2"/>
    <property type="match status" value="2"/>
</dbReference>
<reference key="1">
    <citation type="journal article" date="2008" name="DNA Res.">
        <title>Complete genome sequence and comparative analysis of the wild-type commensal Escherichia coli strain SE11 isolated from a healthy adult.</title>
        <authorList>
            <person name="Oshima K."/>
            <person name="Toh H."/>
            <person name="Ogura Y."/>
            <person name="Sasamoto H."/>
            <person name="Morita H."/>
            <person name="Park S.-H."/>
            <person name="Ooka T."/>
            <person name="Iyoda S."/>
            <person name="Taylor T.D."/>
            <person name="Hayashi T."/>
            <person name="Itoh K."/>
            <person name="Hattori M."/>
        </authorList>
    </citation>
    <scope>NUCLEOTIDE SEQUENCE [LARGE SCALE GENOMIC DNA]</scope>
    <source>
        <strain>SE11</strain>
    </source>
</reference>
<evidence type="ECO:0000255" key="1">
    <source>
        <dbReference type="HAMAP-Rule" id="MF_01558"/>
    </source>
</evidence>
<evidence type="ECO:0000255" key="2">
    <source>
        <dbReference type="PROSITE-ProRule" id="PRU01083"/>
    </source>
</evidence>
<gene>
    <name evidence="1" type="primary">cdd</name>
    <name type="ordered locus">ECSE_2410</name>
</gene>
<feature type="chain" id="PRO_1000147101" description="Cytidine deaminase">
    <location>
        <begin position="1"/>
        <end position="294"/>
    </location>
</feature>
<feature type="domain" description="CMP/dCMP-type deaminase 1" evidence="2">
    <location>
        <begin position="48"/>
        <end position="168"/>
    </location>
</feature>
<feature type="domain" description="CMP/dCMP-type deaminase 2" evidence="2">
    <location>
        <begin position="186"/>
        <end position="294"/>
    </location>
</feature>
<feature type="active site" description="Proton donor" evidence="1">
    <location>
        <position position="104"/>
    </location>
</feature>
<feature type="binding site" evidence="1">
    <location>
        <begin position="89"/>
        <end position="91"/>
    </location>
    <ligand>
        <name>substrate</name>
    </ligand>
</feature>
<feature type="binding site" evidence="1">
    <location>
        <position position="102"/>
    </location>
    <ligand>
        <name>Zn(2+)</name>
        <dbReference type="ChEBI" id="CHEBI:29105"/>
        <note>catalytic</note>
    </ligand>
</feature>
<feature type="binding site" evidence="1">
    <location>
        <position position="129"/>
    </location>
    <ligand>
        <name>Zn(2+)</name>
        <dbReference type="ChEBI" id="CHEBI:29105"/>
        <note>catalytic</note>
    </ligand>
</feature>
<feature type="binding site" evidence="1">
    <location>
        <position position="132"/>
    </location>
    <ligand>
        <name>Zn(2+)</name>
        <dbReference type="ChEBI" id="CHEBI:29105"/>
        <note>catalytic</note>
    </ligand>
</feature>
<sequence length="294" mass="31540">MHPRFQTAFAQLADNLQSALEPILADKYFPALLTGEQVSSLKSATGLDEDALAFALLPLAAACARTPLSNFNVGAIARGVSGTWYFGANMEFIGATMQQTVHAEQSAISHAWLSGEKALAAITVNYTPCGHCRQFMNELNSGLDLRIHLPGREAHALRDYLPDAFGPKDLEIKTLLMDEQDHGYALTGDALSQAAIAAANRSHMPYSKSPSGVALECKDGRIFSGSYAENAAFNPTLPPLQGALILLNLKGYDYPDIQRAVLAEKADAPLIQWDATSATLKALGCHSIDRVLLA</sequence>
<comment type="function">
    <text evidence="1">This enzyme scavenges exogenous and endogenous cytidine and 2'-deoxycytidine for UMP synthesis.</text>
</comment>
<comment type="catalytic activity">
    <reaction evidence="1">
        <text>cytidine + H2O + H(+) = uridine + NH4(+)</text>
        <dbReference type="Rhea" id="RHEA:16069"/>
        <dbReference type="ChEBI" id="CHEBI:15377"/>
        <dbReference type="ChEBI" id="CHEBI:15378"/>
        <dbReference type="ChEBI" id="CHEBI:16704"/>
        <dbReference type="ChEBI" id="CHEBI:17562"/>
        <dbReference type="ChEBI" id="CHEBI:28938"/>
        <dbReference type="EC" id="3.5.4.5"/>
    </reaction>
</comment>
<comment type="catalytic activity">
    <reaction evidence="1">
        <text>2'-deoxycytidine + H2O + H(+) = 2'-deoxyuridine + NH4(+)</text>
        <dbReference type="Rhea" id="RHEA:13433"/>
        <dbReference type="ChEBI" id="CHEBI:15377"/>
        <dbReference type="ChEBI" id="CHEBI:15378"/>
        <dbReference type="ChEBI" id="CHEBI:15698"/>
        <dbReference type="ChEBI" id="CHEBI:16450"/>
        <dbReference type="ChEBI" id="CHEBI:28938"/>
        <dbReference type="EC" id="3.5.4.5"/>
    </reaction>
</comment>
<comment type="cofactor">
    <cofactor evidence="1">
        <name>Zn(2+)</name>
        <dbReference type="ChEBI" id="CHEBI:29105"/>
    </cofactor>
    <text evidence="1">Binds 1 zinc ion.</text>
</comment>
<comment type="subunit">
    <text evidence="1">Homodimer.</text>
</comment>
<comment type="similarity">
    <text evidence="1">Belongs to the cytidine and deoxycytidylate deaminase family.</text>
</comment>
<protein>
    <recommendedName>
        <fullName evidence="1">Cytidine deaminase</fullName>
        <ecNumber evidence="1">3.5.4.5</ecNumber>
    </recommendedName>
    <alternativeName>
        <fullName evidence="1">Cytidine aminohydrolase</fullName>
        <shortName evidence="1">CDA</shortName>
    </alternativeName>
</protein>
<name>CDD_ECOSE</name>
<accession>B6I8J3</accession>
<organism>
    <name type="scientific">Escherichia coli (strain SE11)</name>
    <dbReference type="NCBI Taxonomy" id="409438"/>
    <lineage>
        <taxon>Bacteria</taxon>
        <taxon>Pseudomonadati</taxon>
        <taxon>Pseudomonadota</taxon>
        <taxon>Gammaproteobacteria</taxon>
        <taxon>Enterobacterales</taxon>
        <taxon>Enterobacteriaceae</taxon>
        <taxon>Escherichia</taxon>
    </lineage>
</organism>
<keyword id="KW-0378">Hydrolase</keyword>
<keyword id="KW-0479">Metal-binding</keyword>
<keyword id="KW-0862">Zinc</keyword>